<gene>
    <name type="primary">SEC61</name>
    <name type="ordered locus">CAALFM_C307810CA</name>
    <name type="ORF">CaO19.6176</name>
</gene>
<keyword id="KW-0256">Endoplasmic reticulum</keyword>
<keyword id="KW-0472">Membrane</keyword>
<keyword id="KW-0653">Protein transport</keyword>
<keyword id="KW-1185">Reference proteome</keyword>
<keyword id="KW-0811">Translocation</keyword>
<keyword id="KW-0812">Transmembrane</keyword>
<keyword id="KW-1133">Transmembrane helix</keyword>
<keyword id="KW-0813">Transport</keyword>
<reference key="1">
    <citation type="journal article" date="2004" name="Fungal Genet. Biol.">
        <title>Analysis of heterologous expression of Candida albicans SEC61 gene reveals differences in Sec61p homologues related to species-specific functionality.</title>
        <authorList>
            <person name="de la Rosa J.M."/>
            <person name="Ruiz T."/>
            <person name="Fonzi W.A."/>
            <person name="Rodriguez L."/>
        </authorList>
    </citation>
    <scope>NUCLEOTIDE SEQUENCE [GENOMIC DNA]</scope>
    <scope>SUBCELLULAR LOCATION</scope>
    <source>
        <strain>SC5314 / ATCC MYA-2876</strain>
    </source>
</reference>
<reference key="2">
    <citation type="journal article" date="2004" name="Proc. Natl. Acad. Sci. U.S.A.">
        <title>The diploid genome sequence of Candida albicans.</title>
        <authorList>
            <person name="Jones T."/>
            <person name="Federspiel N.A."/>
            <person name="Chibana H."/>
            <person name="Dungan J."/>
            <person name="Kalman S."/>
            <person name="Magee B.B."/>
            <person name="Newport G."/>
            <person name="Thorstenson Y.R."/>
            <person name="Agabian N."/>
            <person name="Magee P.T."/>
            <person name="Davis R.W."/>
            <person name="Scherer S."/>
        </authorList>
    </citation>
    <scope>NUCLEOTIDE SEQUENCE [LARGE SCALE GENOMIC DNA]</scope>
    <source>
        <strain>SC5314 / ATCC MYA-2876</strain>
    </source>
</reference>
<reference key="3">
    <citation type="journal article" date="2007" name="Genome Biol.">
        <title>Assembly of the Candida albicans genome into sixteen supercontigs aligned on the eight chromosomes.</title>
        <authorList>
            <person name="van het Hoog M."/>
            <person name="Rast T.J."/>
            <person name="Martchenko M."/>
            <person name="Grindle S."/>
            <person name="Dignard D."/>
            <person name="Hogues H."/>
            <person name="Cuomo C."/>
            <person name="Berriman M."/>
            <person name="Scherer S."/>
            <person name="Magee B.B."/>
            <person name="Whiteway M."/>
            <person name="Chibana H."/>
            <person name="Nantel A."/>
            <person name="Magee P.T."/>
        </authorList>
    </citation>
    <scope>GENOME REANNOTATION</scope>
    <source>
        <strain>SC5314 / ATCC MYA-2876</strain>
    </source>
</reference>
<reference key="4">
    <citation type="journal article" date="2013" name="Genome Biol.">
        <title>Assembly of a phased diploid Candida albicans genome facilitates allele-specific measurements and provides a simple model for repeat and indel structure.</title>
        <authorList>
            <person name="Muzzey D."/>
            <person name="Schwartz K."/>
            <person name="Weissman J.S."/>
            <person name="Sherlock G."/>
        </authorList>
    </citation>
    <scope>NUCLEOTIDE SEQUENCE [LARGE SCALE GENOMIC DNA]</scope>
    <scope>GENOME REANNOTATION</scope>
    <source>
        <strain>SC5314 / ATCC MYA-2876</strain>
    </source>
</reference>
<organism>
    <name type="scientific">Candida albicans (strain SC5314 / ATCC MYA-2876)</name>
    <name type="common">Yeast</name>
    <dbReference type="NCBI Taxonomy" id="237561"/>
    <lineage>
        <taxon>Eukaryota</taxon>
        <taxon>Fungi</taxon>
        <taxon>Dikarya</taxon>
        <taxon>Ascomycota</taxon>
        <taxon>Saccharomycotina</taxon>
        <taxon>Pichiomycetes</taxon>
        <taxon>Debaryomycetaceae</taxon>
        <taxon>Candida/Lodderomyces clade</taxon>
        <taxon>Candida</taxon>
    </lineage>
</organism>
<accession>Q9P8E3</accession>
<accession>A0A1D8PKY6</accession>
<accession>Q59MJ6</accession>
<comment type="function">
    <text evidence="1">Appears to play a crucial role in the insertion of secretory and membrane polypeptides into the ER. It is required for assembly of membrane and secretory proteins and is essential for cell growth. It interacts with other membrane proteins required for protein translocation. Upon binding to SEC62/63 complex, secretory precursor polypeptides may engage SEC61 to begin membrane penetration event. A cycle of assembly and disassembly of SEC62/63 from SEC61 may govern the activity of the translocase (By similarity).</text>
</comment>
<comment type="subunit">
    <text evidence="1">Heterotrimeric complex composed of SEC61-alpha, SEC61-beta and SEC61-gamma.</text>
</comment>
<comment type="subcellular location">
    <subcellularLocation>
        <location evidence="3">Endoplasmic reticulum membrane</location>
        <topology evidence="3">Multi-pass membrane protein</topology>
    </subcellularLocation>
</comment>
<comment type="similarity">
    <text evidence="4">Belongs to the SecY/SEC61-alpha family.</text>
</comment>
<name>SC61A_CANAL</name>
<sequence>MSGFRVLDLVKPFSPFLPEVIAPERKVQFQQRVMWTIITLLIFLVMSEIPLYGIASSDSSDPLFWLRMMLASNRGTLMELGISPIVSSGMLFQLLQGTKIIHVDMQNKNDRETFQTAQKLLAILLAVGQATVYVLTGMYGPPSSLGVGVCSLLILQLVFASTIVILLDELLQKGYGLGSGVSLFTATNTCEQVFWKAFAPTTSTSAKGTEFDGAVVAMFHLLGSRKDKKRALIESFYRPNLPNMFQLLATLLVFFAVVYLQGFRIELPMKSTRQRGPYGSYPIRLFYTSNIPIMLESALASNIFIISQLLFMRWPNNLFVKLLGTWDARAGSSQLYANGGLAYYIQPPFNFTDALLDPIKTTIYIAFVLGSCAVFSTTWIEISGTSPRDVAKQFKEQGLVIAGHRDTSAYKELKKIIPIAAAFGGATIGALSVVCDLMGTLGSGTSILLAVTTIYGYYELAVKEGGFNKSIVSGFSDGI</sequence>
<protein>
    <recommendedName>
        <fullName>Protein transport protein SEC61 subunit alpha</fullName>
    </recommendedName>
</protein>
<proteinExistence type="inferred from homology"/>
<dbReference type="EMBL" id="AJ238713">
    <property type="protein sequence ID" value="CAB90210.1"/>
    <property type="molecule type" value="Genomic_DNA"/>
</dbReference>
<dbReference type="EMBL" id="CP017625">
    <property type="protein sequence ID" value="AOW28779.1"/>
    <property type="molecule type" value="Genomic_DNA"/>
</dbReference>
<dbReference type="RefSeq" id="XP_710932.1">
    <property type="nucleotide sequence ID" value="XM_705840.1"/>
</dbReference>
<dbReference type="SMR" id="Q9P8E3"/>
<dbReference type="FunCoup" id="Q9P8E3">
    <property type="interactions" value="991"/>
</dbReference>
<dbReference type="STRING" id="237561.Q9P8E3"/>
<dbReference type="EnsemblFungi" id="C3_07810C_A-T">
    <property type="protein sequence ID" value="C3_07810C_A-T-p1"/>
    <property type="gene ID" value="C3_07810C_A"/>
</dbReference>
<dbReference type="GeneID" id="3647462"/>
<dbReference type="KEGG" id="cal:CAALFM_C307810CA"/>
<dbReference type="CGD" id="CAL0000178942">
    <property type="gene designation" value="SEC61"/>
</dbReference>
<dbReference type="VEuPathDB" id="FungiDB:C3_07810C_A"/>
<dbReference type="eggNOG" id="KOG1373">
    <property type="taxonomic scope" value="Eukaryota"/>
</dbReference>
<dbReference type="HOGENOM" id="CLU_031763_2_1_1"/>
<dbReference type="InParanoid" id="Q9P8E3"/>
<dbReference type="OMA" id="PMMRQMF"/>
<dbReference type="OrthoDB" id="420669at2759"/>
<dbReference type="Proteomes" id="UP000000559">
    <property type="component" value="Chromosome 3"/>
</dbReference>
<dbReference type="GO" id="GO:1903561">
    <property type="term" value="C:extracellular vesicle"/>
    <property type="evidence" value="ECO:0000314"/>
    <property type="project" value="CGD"/>
</dbReference>
<dbReference type="GO" id="GO:0000324">
    <property type="term" value="C:fungal-type vacuole"/>
    <property type="evidence" value="ECO:0007669"/>
    <property type="project" value="EnsemblFungi"/>
</dbReference>
<dbReference type="GO" id="GO:0005886">
    <property type="term" value="C:plasma membrane"/>
    <property type="evidence" value="ECO:0000314"/>
    <property type="project" value="CGD"/>
</dbReference>
<dbReference type="GO" id="GO:0005784">
    <property type="term" value="C:Sec61 translocon complex"/>
    <property type="evidence" value="ECO:0000318"/>
    <property type="project" value="GO_Central"/>
</dbReference>
<dbReference type="GO" id="GO:1904680">
    <property type="term" value="F:peptide transmembrane transporter activity"/>
    <property type="evidence" value="ECO:0007669"/>
    <property type="project" value="EnsemblFungi"/>
</dbReference>
<dbReference type="GO" id="GO:0008320">
    <property type="term" value="F:protein transmembrane transporter activity"/>
    <property type="evidence" value="ECO:0000318"/>
    <property type="project" value="GO_Central"/>
</dbReference>
<dbReference type="GO" id="GO:0015450">
    <property type="term" value="F:protein-transporting ATPase activity"/>
    <property type="evidence" value="ECO:0007669"/>
    <property type="project" value="EnsemblFungi"/>
</dbReference>
<dbReference type="GO" id="GO:0043022">
    <property type="term" value="F:ribosome binding"/>
    <property type="evidence" value="ECO:0000318"/>
    <property type="project" value="GO_Central"/>
</dbReference>
<dbReference type="GO" id="GO:0005048">
    <property type="term" value="F:signal sequence binding"/>
    <property type="evidence" value="ECO:0000318"/>
    <property type="project" value="GO_Central"/>
</dbReference>
<dbReference type="GO" id="GO:0070843">
    <property type="term" value="P:misfolded protein transport"/>
    <property type="evidence" value="ECO:0007669"/>
    <property type="project" value="EnsemblFungi"/>
</dbReference>
<dbReference type="GO" id="GO:0031204">
    <property type="term" value="P:post-translational protein targeting to membrane, translocation"/>
    <property type="evidence" value="ECO:0000318"/>
    <property type="project" value="GO_Central"/>
</dbReference>
<dbReference type="GO" id="GO:0015031">
    <property type="term" value="P:protein transport"/>
    <property type="evidence" value="ECO:0000315"/>
    <property type="project" value="CGD"/>
</dbReference>
<dbReference type="GO" id="GO:0030970">
    <property type="term" value="P:retrograde protein transport, ER to cytosol"/>
    <property type="evidence" value="ECO:0007669"/>
    <property type="project" value="EnsemblFungi"/>
</dbReference>
<dbReference type="GO" id="GO:0006616">
    <property type="term" value="P:SRP-dependent cotranslational protein targeting to membrane, translocation"/>
    <property type="evidence" value="ECO:0000318"/>
    <property type="project" value="GO_Central"/>
</dbReference>
<dbReference type="FunFam" id="1.10.3370.10:FF:000002">
    <property type="entry name" value="Transport Sec61 subunit alpha isoform 2"/>
    <property type="match status" value="1"/>
</dbReference>
<dbReference type="Gene3D" id="1.10.3370.10">
    <property type="entry name" value="SecY subunit domain"/>
    <property type="match status" value="1"/>
</dbReference>
<dbReference type="InterPro" id="IPR002208">
    <property type="entry name" value="SecY/SEC61-alpha"/>
</dbReference>
<dbReference type="InterPro" id="IPR030659">
    <property type="entry name" value="SecY_CS"/>
</dbReference>
<dbReference type="InterPro" id="IPR023201">
    <property type="entry name" value="SecY_dom_sf"/>
</dbReference>
<dbReference type="InterPro" id="IPR019561">
    <property type="entry name" value="Translocon_Sec61/SecY_plug_dom"/>
</dbReference>
<dbReference type="NCBIfam" id="TIGR00967">
    <property type="entry name" value="3a0501s007"/>
    <property type="match status" value="1"/>
</dbReference>
<dbReference type="NCBIfam" id="NF006341">
    <property type="entry name" value="PRK08568.1-5"/>
    <property type="match status" value="1"/>
</dbReference>
<dbReference type="PANTHER" id="PTHR10906">
    <property type="entry name" value="SECY/SEC61-ALPHA FAMILY MEMBER"/>
    <property type="match status" value="1"/>
</dbReference>
<dbReference type="Pfam" id="PF10559">
    <property type="entry name" value="Plug_translocon"/>
    <property type="match status" value="1"/>
</dbReference>
<dbReference type="Pfam" id="PF00344">
    <property type="entry name" value="SecY"/>
    <property type="match status" value="1"/>
</dbReference>
<dbReference type="PIRSF" id="PIRSF004557">
    <property type="entry name" value="SecY"/>
    <property type="match status" value="1"/>
</dbReference>
<dbReference type="SUPFAM" id="SSF103491">
    <property type="entry name" value="Preprotein translocase SecY subunit"/>
    <property type="match status" value="1"/>
</dbReference>
<dbReference type="PROSITE" id="PS00755">
    <property type="entry name" value="SECY_1"/>
    <property type="match status" value="1"/>
</dbReference>
<dbReference type="PROSITE" id="PS00756">
    <property type="entry name" value="SECY_2"/>
    <property type="match status" value="1"/>
</dbReference>
<feature type="chain" id="PRO_0000131781" description="Protein transport protein SEC61 subunit alpha">
    <location>
        <begin position="1"/>
        <end position="479"/>
    </location>
</feature>
<feature type="topological domain" description="Cytoplasmic" evidence="2">
    <location>
        <begin position="1"/>
        <end position="33"/>
    </location>
</feature>
<feature type="transmembrane region" description="Helical" evidence="2">
    <location>
        <begin position="34"/>
        <end position="54"/>
    </location>
</feature>
<feature type="topological domain" description="Lumenal" evidence="2">
    <location>
        <begin position="55"/>
        <end position="76"/>
    </location>
</feature>
<feature type="transmembrane region" description="Helical" evidence="2">
    <location>
        <begin position="77"/>
        <end position="97"/>
    </location>
</feature>
<feature type="topological domain" description="Cytoplasmic" evidence="2">
    <location>
        <begin position="98"/>
        <end position="119"/>
    </location>
</feature>
<feature type="transmembrane region" description="Helical" evidence="2">
    <location>
        <begin position="120"/>
        <end position="140"/>
    </location>
</feature>
<feature type="topological domain" description="Lumenal" evidence="2">
    <location>
        <begin position="141"/>
        <end position="146"/>
    </location>
</feature>
<feature type="transmembrane region" description="Helical" evidence="2">
    <location>
        <begin position="147"/>
        <end position="167"/>
    </location>
</feature>
<feature type="topological domain" description="Cytoplasmic" evidence="2">
    <location>
        <begin position="168"/>
        <end position="246"/>
    </location>
</feature>
<feature type="transmembrane region" description="Helical" evidence="2">
    <location>
        <begin position="247"/>
        <end position="267"/>
    </location>
</feature>
<feature type="topological domain" description="Lumenal" evidence="2">
    <location>
        <begin position="268"/>
        <end position="361"/>
    </location>
</feature>
<feature type="transmembrane region" description="Helical" evidence="2">
    <location>
        <begin position="362"/>
        <end position="382"/>
    </location>
</feature>
<feature type="topological domain" description="Cytoplasmic" evidence="2">
    <location>
        <begin position="383"/>
        <end position="415"/>
    </location>
</feature>
<feature type="transmembrane region" description="Helical" evidence="2">
    <location>
        <begin position="416"/>
        <end position="434"/>
    </location>
</feature>
<feature type="topological domain" description="Lumenal" evidence="2">
    <location>
        <begin position="435"/>
        <end position="440"/>
    </location>
</feature>
<feature type="transmembrane region" description="Helical" evidence="2">
    <location>
        <begin position="441"/>
        <end position="458"/>
    </location>
</feature>
<feature type="topological domain" description="Cytoplasmic" evidence="2">
    <location>
        <begin position="459"/>
        <end position="479"/>
    </location>
</feature>
<feature type="sequence conflict" description="In Ref. 1; CAB90210." evidence="4" ref="1">
    <original>P</original>
    <variation>H</variation>
    <location>
        <position position="418"/>
    </location>
</feature>
<evidence type="ECO:0000250" key="1"/>
<evidence type="ECO:0000255" key="2"/>
<evidence type="ECO:0000269" key="3">
    <source>
    </source>
</evidence>
<evidence type="ECO:0000305" key="4"/>